<proteinExistence type="evidence at protein level"/>
<name>JZ21A_CHIGU</name>
<evidence type="ECO:0000250" key="1"/>
<evidence type="ECO:0000255" key="2"/>
<evidence type="ECO:0000269" key="3">
    <source>
    </source>
</evidence>
<evidence type="ECO:0000303" key="4">
    <source>
    </source>
</evidence>
<evidence type="ECO:0000305" key="5"/>
<evidence type="ECO:0000312" key="6">
    <source>
        <dbReference type="EMBL" id="ABY71696.1"/>
    </source>
</evidence>
<protein>
    <recommendedName>
        <fullName>U14-theraphotoxin-Cg1a 1</fullName>
        <shortName>U14-TRTX-Cg1a</shortName>
    </recommendedName>
    <alternativeName>
        <fullName evidence="6">Jingzhaotoxin-21</fullName>
        <shortName evidence="6">JZTX-21</shortName>
    </alternativeName>
    <alternativeName>
        <fullName evidence="4">Peptide F3-11.69</fullName>
    </alternativeName>
</protein>
<sequence>MKTSVLLVILGIAAITVQCTASESVEQDSLRTFVDAVLGWNAEMASEARCGGWMAKCADSDDCCETFHCTRFNVCGK</sequence>
<organism>
    <name type="scientific">Chilobrachys guangxiensis</name>
    <name type="common">Chinese earth tiger tarantula</name>
    <name type="synonym">Chilobrachys jingzhao</name>
    <dbReference type="NCBI Taxonomy" id="278060"/>
    <lineage>
        <taxon>Eukaryota</taxon>
        <taxon>Metazoa</taxon>
        <taxon>Ecdysozoa</taxon>
        <taxon>Arthropoda</taxon>
        <taxon>Chelicerata</taxon>
        <taxon>Arachnida</taxon>
        <taxon>Araneae</taxon>
        <taxon>Mygalomorphae</taxon>
        <taxon>Theraphosidae</taxon>
        <taxon>Chilobrachys</taxon>
    </lineage>
</organism>
<dbReference type="EMBL" id="EU233877">
    <property type="protein sequence ID" value="ABY71696.1"/>
    <property type="molecule type" value="mRNA"/>
</dbReference>
<dbReference type="SMR" id="B1P1E6"/>
<dbReference type="ArachnoServer" id="AS000825">
    <property type="toxin name" value="U14-theraphotoxin-Cg1b"/>
</dbReference>
<dbReference type="GO" id="GO:0005576">
    <property type="term" value="C:extracellular region"/>
    <property type="evidence" value="ECO:0007669"/>
    <property type="project" value="UniProtKB-SubCell"/>
</dbReference>
<dbReference type="GO" id="GO:0099106">
    <property type="term" value="F:ion channel regulator activity"/>
    <property type="evidence" value="ECO:0007669"/>
    <property type="project" value="UniProtKB-KW"/>
</dbReference>
<dbReference type="GO" id="GO:0090729">
    <property type="term" value="F:toxin activity"/>
    <property type="evidence" value="ECO:0007669"/>
    <property type="project" value="UniProtKB-KW"/>
</dbReference>
<keyword id="KW-0027">Amidation</keyword>
<keyword id="KW-0903">Direct protein sequencing</keyword>
<keyword id="KW-1015">Disulfide bond</keyword>
<keyword id="KW-0872">Ion channel impairing toxin</keyword>
<keyword id="KW-0960">Knottin</keyword>
<keyword id="KW-0964">Secreted</keyword>
<keyword id="KW-0732">Signal</keyword>
<keyword id="KW-0800">Toxin</keyword>
<comment type="function">
    <text>Probable ion channel inhibitor.</text>
</comment>
<comment type="subcellular location">
    <subcellularLocation>
        <location>Secreted</location>
    </subcellularLocation>
</comment>
<comment type="tissue specificity">
    <text>Expressed by the venom gland.</text>
</comment>
<comment type="domain">
    <text evidence="1">The presence of a 'disulfide through disulfide knot' structurally defines this protein as a knottin.</text>
</comment>
<comment type="mass spectrometry">
    <text>Monoisotopic mass.</text>
</comment>
<comment type="similarity">
    <text evidence="5">Belongs to the neurotoxin 10 (Hwtx-1) family. 65 (Jztx-21) subfamily.</text>
</comment>
<feature type="signal peptide" evidence="2">
    <location>
        <begin position="1"/>
        <end position="21"/>
    </location>
</feature>
<feature type="propeptide" id="PRO_0000398439" evidence="3">
    <location>
        <begin position="22"/>
        <end position="49"/>
    </location>
</feature>
<feature type="peptide" id="PRO_0000398440" description="U14-theraphotoxin-Cg1a 1">
    <location>
        <begin position="50"/>
        <end position="77"/>
    </location>
</feature>
<feature type="modified residue" description="Lysine amide" evidence="3">
    <location>
        <position position="77"/>
    </location>
</feature>
<feature type="disulfide bond" evidence="1">
    <location>
        <begin position="50"/>
        <end position="64"/>
    </location>
</feature>
<feature type="disulfide bond" evidence="1">
    <location>
        <begin position="57"/>
        <end position="69"/>
    </location>
</feature>
<feature type="disulfide bond" evidence="1">
    <location>
        <begin position="63"/>
        <end position="75"/>
    </location>
</feature>
<accession>B1P1E6</accession>
<reference key="1">
    <citation type="journal article" date="2008" name="Cell. Mol. Life Sci.">
        <title>Molecular diversity and evolution of cystine knot toxins of the tarantula Chilobrachys jingzhao.</title>
        <authorList>
            <person name="Chen J."/>
            <person name="Deng M."/>
            <person name="He Q."/>
            <person name="Meng E."/>
            <person name="Jiang L."/>
            <person name="Liao Z."/>
            <person name="Rong M."/>
            <person name="Liang S."/>
        </authorList>
    </citation>
    <scope>NUCLEOTIDE SEQUENCE [LARGE SCALE MRNA]</scope>
    <source>
        <tissue>Venom gland</tissue>
    </source>
</reference>
<reference key="2">
    <citation type="journal article" date="2007" name="Proteomics">
        <title>Proteomic and peptidomic analysis of the venom from Chinese tarantula Chilobrachys jingzhao.</title>
        <authorList>
            <person name="Liao Z."/>
            <person name="Cao J."/>
            <person name="Li S."/>
            <person name="Yan X."/>
            <person name="Hu W."/>
            <person name="He Q."/>
            <person name="Chen J."/>
            <person name="Tang J."/>
            <person name="Xie J."/>
            <person name="Liang S."/>
        </authorList>
    </citation>
    <scope>PROTEIN SEQUENCE OF 50-77</scope>
    <scope>MASS SPECTROMETRY</scope>
    <scope>AMIDATION AT LYS-77</scope>
    <source>
        <tissue>Venom</tissue>
    </source>
</reference>